<gene>
    <name type="primary">P2rx3</name>
</gene>
<sequence>MNCISDFFTYETTKSVVVKSWTIGIINRAVQLLIISYFVGWVFLHEKAYQVRDTAIESSVVTKVKGFGRYANRVMDVSDYVTPPQGTSVFVIITKMIVTENQMQGFCPENEEKYRCVSDSQCGPERFPGGGILTGRCVNYSSVLRTCEIQGWCPTEVDTVEMPIMMEAENFTIFIKNSIRFPLFNFEKGNLLPNLTDKDIKRCRFHPEKAPFCPILRVGDVVKFAGQDFAKLARTGGVLGIKIGWVCDLDKAWDQCIPKYSFTRLDGVSEKSSVSPGYNFRFAKYYKMENGSEYRTLLKAFGIRFDVLVYGNAGKFNIIPTIISSVAAFTSVGVGTVLCDIILLNFLKGADHYKARKFEEVTETTLKGTASTNPVFASDQATVEKQSTDSGAYSIGH</sequence>
<dbReference type="EMBL" id="X91167">
    <property type="protein sequence ID" value="CAA62594.1"/>
    <property type="molecule type" value="mRNA"/>
</dbReference>
<dbReference type="EMBL" id="X90651">
    <property type="protein sequence ID" value="CAA62223.1"/>
    <property type="molecule type" value="mRNA"/>
</dbReference>
<dbReference type="PIR" id="I58099">
    <property type="entry name" value="I58099"/>
</dbReference>
<dbReference type="PIR" id="S60334">
    <property type="entry name" value="S60334"/>
</dbReference>
<dbReference type="RefSeq" id="NP_001257550.1">
    <property type="nucleotide sequence ID" value="NM_001270621.1"/>
</dbReference>
<dbReference type="RefSeq" id="NP_112337.2">
    <property type="nucleotide sequence ID" value="NM_031075.3"/>
</dbReference>
<dbReference type="SMR" id="P49654"/>
<dbReference type="CORUM" id="P49654"/>
<dbReference type="FunCoup" id="P49654">
    <property type="interactions" value="80"/>
</dbReference>
<dbReference type="STRING" id="10116.ENSRNOP00000031629"/>
<dbReference type="BindingDB" id="P49654"/>
<dbReference type="ChEMBL" id="CHEMBL4824"/>
<dbReference type="DrugCentral" id="P49654"/>
<dbReference type="GuidetoPHARMACOLOGY" id="480"/>
<dbReference type="GlyCosmos" id="P49654">
    <property type="glycosylation" value="4 sites, No reported glycans"/>
</dbReference>
<dbReference type="GlyGen" id="P49654">
    <property type="glycosylation" value="5 sites"/>
</dbReference>
<dbReference type="iPTMnet" id="P49654"/>
<dbReference type="PhosphoSitePlus" id="P49654"/>
<dbReference type="PaxDb" id="10116-ENSRNOP00000031629"/>
<dbReference type="GeneID" id="81739"/>
<dbReference type="KEGG" id="rno:81739"/>
<dbReference type="UCSC" id="RGD:620253">
    <property type="organism name" value="rat"/>
</dbReference>
<dbReference type="AGR" id="RGD:620253"/>
<dbReference type="CTD" id="5024"/>
<dbReference type="RGD" id="620253">
    <property type="gene designation" value="P2rx3"/>
</dbReference>
<dbReference type="VEuPathDB" id="HostDB:ENSRNOG00000008552"/>
<dbReference type="eggNOG" id="ENOG502QUDE">
    <property type="taxonomic scope" value="Eukaryota"/>
</dbReference>
<dbReference type="InParanoid" id="P49654"/>
<dbReference type="PhylomeDB" id="P49654"/>
<dbReference type="Reactome" id="R-RNO-139853">
    <property type="pathway name" value="Elevation of cytosolic Ca2+ levels"/>
</dbReference>
<dbReference type="Reactome" id="R-RNO-418346">
    <property type="pathway name" value="Platelet homeostasis"/>
</dbReference>
<dbReference type="PRO" id="PR:P49654"/>
<dbReference type="Proteomes" id="UP000002494">
    <property type="component" value="Chromosome 3"/>
</dbReference>
<dbReference type="Bgee" id="ENSRNOG00000008552">
    <property type="expression patterns" value="Expressed in pancreas and 13 other cell types or tissues"/>
</dbReference>
<dbReference type="ExpressionAtlas" id="P49654">
    <property type="expression patterns" value="baseline and differential"/>
</dbReference>
<dbReference type="GO" id="GO:0030424">
    <property type="term" value="C:axon"/>
    <property type="evidence" value="ECO:0000266"/>
    <property type="project" value="RGD"/>
</dbReference>
<dbReference type="GO" id="GO:0043197">
    <property type="term" value="C:dendritic spine"/>
    <property type="evidence" value="ECO:0000314"/>
    <property type="project" value="RGD"/>
</dbReference>
<dbReference type="GO" id="GO:0098686">
    <property type="term" value="C:hippocampal mossy fiber to CA3 synapse"/>
    <property type="evidence" value="ECO:0000266"/>
    <property type="project" value="RGD"/>
</dbReference>
<dbReference type="GO" id="GO:0043005">
    <property type="term" value="C:neuron projection"/>
    <property type="evidence" value="ECO:0000266"/>
    <property type="project" value="RGD"/>
</dbReference>
<dbReference type="GO" id="GO:0043025">
    <property type="term" value="C:neuronal cell body"/>
    <property type="evidence" value="ECO:0000314"/>
    <property type="project" value="RGD"/>
</dbReference>
<dbReference type="GO" id="GO:0005886">
    <property type="term" value="C:plasma membrane"/>
    <property type="evidence" value="ECO:0000315"/>
    <property type="project" value="UniProtKB"/>
</dbReference>
<dbReference type="GO" id="GO:0042734">
    <property type="term" value="C:presynaptic membrane"/>
    <property type="evidence" value="ECO:0000314"/>
    <property type="project" value="SynGO"/>
</dbReference>
<dbReference type="GO" id="GO:0043235">
    <property type="term" value="C:receptor complex"/>
    <property type="evidence" value="ECO:0000266"/>
    <property type="project" value="RGD"/>
</dbReference>
<dbReference type="GO" id="GO:0098685">
    <property type="term" value="C:Schaffer collateral - CA1 synapse"/>
    <property type="evidence" value="ECO:0000266"/>
    <property type="project" value="RGD"/>
</dbReference>
<dbReference type="GO" id="GO:0043195">
    <property type="term" value="C:terminal bouton"/>
    <property type="evidence" value="ECO:0000314"/>
    <property type="project" value="RGD"/>
</dbReference>
<dbReference type="GO" id="GO:0005524">
    <property type="term" value="F:ATP binding"/>
    <property type="evidence" value="ECO:0000314"/>
    <property type="project" value="RGD"/>
</dbReference>
<dbReference type="GO" id="GO:0004931">
    <property type="term" value="F:extracellularly ATP-gated monoatomic cation channel activity"/>
    <property type="evidence" value="ECO:0000314"/>
    <property type="project" value="UniProtKB"/>
</dbReference>
<dbReference type="GO" id="GO:0042802">
    <property type="term" value="F:identical protein binding"/>
    <property type="evidence" value="ECO:0000353"/>
    <property type="project" value="RGD"/>
</dbReference>
<dbReference type="GO" id="GO:0046872">
    <property type="term" value="F:metal ion binding"/>
    <property type="evidence" value="ECO:0007669"/>
    <property type="project" value="UniProtKB-KW"/>
</dbReference>
<dbReference type="GO" id="GO:0001614">
    <property type="term" value="F:purinergic nucleotide receptor activity"/>
    <property type="evidence" value="ECO:0000314"/>
    <property type="project" value="UniProtKB"/>
</dbReference>
<dbReference type="GO" id="GO:0061368">
    <property type="term" value="P:behavioral response to formalin induced pain"/>
    <property type="evidence" value="ECO:0000315"/>
    <property type="project" value="RGD"/>
</dbReference>
<dbReference type="GO" id="GO:0048266">
    <property type="term" value="P:behavioral response to pain"/>
    <property type="evidence" value="ECO:0000266"/>
    <property type="project" value="RGD"/>
</dbReference>
<dbReference type="GO" id="GO:0070588">
    <property type="term" value="P:calcium ion transmembrane transport"/>
    <property type="evidence" value="ECO:0000314"/>
    <property type="project" value="UniProtKB"/>
</dbReference>
<dbReference type="GO" id="GO:0071318">
    <property type="term" value="P:cellular response to ATP"/>
    <property type="evidence" value="ECO:0000314"/>
    <property type="project" value="UniProtKB"/>
</dbReference>
<dbReference type="GO" id="GO:0007268">
    <property type="term" value="P:chemical synaptic transmission"/>
    <property type="evidence" value="ECO:0000266"/>
    <property type="project" value="RGD"/>
</dbReference>
<dbReference type="GO" id="GO:0051649">
    <property type="term" value="P:establishment of localization in cell"/>
    <property type="evidence" value="ECO:0000266"/>
    <property type="project" value="RGD"/>
</dbReference>
<dbReference type="GO" id="GO:0098662">
    <property type="term" value="P:inorganic cation transmembrane transport"/>
    <property type="evidence" value="ECO:0000250"/>
    <property type="project" value="UniProtKB"/>
</dbReference>
<dbReference type="GO" id="GO:0050804">
    <property type="term" value="P:modulation of chemical synaptic transmission"/>
    <property type="evidence" value="ECO:0000266"/>
    <property type="project" value="RGD"/>
</dbReference>
<dbReference type="GO" id="GO:0006812">
    <property type="term" value="P:monoatomic cation transport"/>
    <property type="evidence" value="ECO:0000266"/>
    <property type="project" value="RGD"/>
</dbReference>
<dbReference type="GO" id="GO:0006811">
    <property type="term" value="P:monoatomic ion transport"/>
    <property type="evidence" value="ECO:0000266"/>
    <property type="project" value="RGD"/>
</dbReference>
<dbReference type="GO" id="GO:0007274">
    <property type="term" value="P:neuromuscular synaptic transmission"/>
    <property type="evidence" value="ECO:0000266"/>
    <property type="project" value="RGD"/>
</dbReference>
<dbReference type="GO" id="GO:0019228">
    <property type="term" value="P:neuronal action potential"/>
    <property type="evidence" value="ECO:0000314"/>
    <property type="project" value="RGD"/>
</dbReference>
<dbReference type="GO" id="GO:0030432">
    <property type="term" value="P:peristalsis"/>
    <property type="evidence" value="ECO:0000266"/>
    <property type="project" value="RGD"/>
</dbReference>
<dbReference type="GO" id="GO:0070207">
    <property type="term" value="P:protein homotrimerization"/>
    <property type="evidence" value="ECO:0000250"/>
    <property type="project" value="UniProtKB"/>
</dbReference>
<dbReference type="GO" id="GO:0048167">
    <property type="term" value="P:regulation of synaptic plasticity"/>
    <property type="evidence" value="ECO:0000266"/>
    <property type="project" value="RGD"/>
</dbReference>
<dbReference type="GO" id="GO:0033198">
    <property type="term" value="P:response to ATP"/>
    <property type="evidence" value="ECO:0000266"/>
    <property type="project" value="RGD"/>
</dbReference>
<dbReference type="GO" id="GO:0009743">
    <property type="term" value="P:response to carbohydrate"/>
    <property type="evidence" value="ECO:0000266"/>
    <property type="project" value="RGD"/>
</dbReference>
<dbReference type="GO" id="GO:0009409">
    <property type="term" value="P:response to cold"/>
    <property type="evidence" value="ECO:0000266"/>
    <property type="project" value="RGD"/>
</dbReference>
<dbReference type="GO" id="GO:0009408">
    <property type="term" value="P:response to heat"/>
    <property type="evidence" value="ECO:0000266"/>
    <property type="project" value="RGD"/>
</dbReference>
<dbReference type="GO" id="GO:0001666">
    <property type="term" value="P:response to hypoxia"/>
    <property type="evidence" value="ECO:0000266"/>
    <property type="project" value="RGD"/>
</dbReference>
<dbReference type="GO" id="GO:0009612">
    <property type="term" value="P:response to mechanical stimulus"/>
    <property type="evidence" value="ECO:0000266"/>
    <property type="project" value="RGD"/>
</dbReference>
<dbReference type="GO" id="GO:0009266">
    <property type="term" value="P:response to temperature stimulus"/>
    <property type="evidence" value="ECO:0000266"/>
    <property type="project" value="RGD"/>
</dbReference>
<dbReference type="GO" id="GO:0050909">
    <property type="term" value="P:sensory perception of taste"/>
    <property type="evidence" value="ECO:0000266"/>
    <property type="project" value="RGD"/>
</dbReference>
<dbReference type="GO" id="GO:0014832">
    <property type="term" value="P:urinary bladder smooth muscle contraction"/>
    <property type="evidence" value="ECO:0000266"/>
    <property type="project" value="RGD"/>
</dbReference>
<dbReference type="FunFam" id="2.60.490.10:FF:000001">
    <property type="entry name" value="P2X purinoceptor"/>
    <property type="match status" value="1"/>
</dbReference>
<dbReference type="FunFam" id="1.10.287.940:FF:000010">
    <property type="entry name" value="P2X receptor E"/>
    <property type="match status" value="1"/>
</dbReference>
<dbReference type="Gene3D" id="1.10.287.940">
    <property type="entry name" value="atp-gated p2x4 ion channel"/>
    <property type="match status" value="1"/>
</dbReference>
<dbReference type="Gene3D" id="2.60.490.10">
    <property type="entry name" value="atp-gated p2x4 ion channel domain"/>
    <property type="match status" value="1"/>
</dbReference>
<dbReference type="InterPro" id="IPR003046">
    <property type="entry name" value="P2X3_purnocptor"/>
</dbReference>
<dbReference type="InterPro" id="IPR027309">
    <property type="entry name" value="P2X_extracellular_dom_sf"/>
</dbReference>
<dbReference type="InterPro" id="IPR001429">
    <property type="entry name" value="P2X_purnocptor"/>
</dbReference>
<dbReference type="InterPro" id="IPR053792">
    <property type="entry name" value="P2X_RECEPTOR_CS"/>
</dbReference>
<dbReference type="NCBIfam" id="TIGR00863">
    <property type="entry name" value="P2X"/>
    <property type="match status" value="1"/>
</dbReference>
<dbReference type="PANTHER" id="PTHR10125">
    <property type="entry name" value="P2X PURINOCEPTOR"/>
    <property type="match status" value="1"/>
</dbReference>
<dbReference type="PANTHER" id="PTHR10125:SF8">
    <property type="entry name" value="P2X PURINOCEPTOR 3"/>
    <property type="match status" value="1"/>
</dbReference>
<dbReference type="Pfam" id="PF00864">
    <property type="entry name" value="P2X_receptor"/>
    <property type="match status" value="1"/>
</dbReference>
<dbReference type="PIRSF" id="PIRSF005713">
    <property type="entry name" value="P2X_purinoceptor"/>
    <property type="match status" value="1"/>
</dbReference>
<dbReference type="PRINTS" id="PR01310">
    <property type="entry name" value="P2X3RECEPTOR"/>
</dbReference>
<dbReference type="PRINTS" id="PR01307">
    <property type="entry name" value="P2XRECEPTOR"/>
</dbReference>
<dbReference type="PROSITE" id="PS01212">
    <property type="entry name" value="P2X_RECEPTOR"/>
    <property type="match status" value="1"/>
</dbReference>
<feature type="chain" id="PRO_0000161552" description="P2X purinoceptor 3">
    <location>
        <begin position="1"/>
        <end position="397"/>
    </location>
</feature>
<feature type="topological domain" description="Cytoplasmic" evidence="7">
    <location>
        <begin position="1"/>
        <end position="20"/>
    </location>
</feature>
<feature type="transmembrane region" description="Helical; Name=1" evidence="1">
    <location>
        <begin position="21"/>
        <end position="43"/>
    </location>
</feature>
<feature type="topological domain" description="Extracellular" evidence="7">
    <location>
        <begin position="44"/>
        <end position="322"/>
    </location>
</feature>
<feature type="transmembrane region" description="Helical; Name=2" evidence="1">
    <location>
        <begin position="323"/>
        <end position="341"/>
    </location>
</feature>
<feature type="topological domain" description="Cytoplasmic" evidence="7">
    <location>
        <begin position="342"/>
        <end position="397"/>
    </location>
</feature>
<feature type="binding site" evidence="1">
    <location>
        <position position="63"/>
    </location>
    <ligand>
        <name>ATP</name>
        <dbReference type="ChEBI" id="CHEBI:30616"/>
        <note>ligand shared between two neighboring subunits of the homotrimer</note>
    </ligand>
</feature>
<feature type="binding site" evidence="1">
    <location>
        <position position="65"/>
    </location>
    <ligand>
        <name>ATP</name>
        <dbReference type="ChEBI" id="CHEBI:30616"/>
        <note>ligand shared between two neighboring subunits of the homotrimer</note>
    </ligand>
</feature>
<feature type="binding site" evidence="1">
    <location>
        <position position="111"/>
    </location>
    <ligand>
        <name>Mg(2+)</name>
        <dbReference type="ChEBI" id="CHEBI:18420"/>
    </ligand>
</feature>
<feature type="binding site" evidence="1">
    <location>
        <position position="158"/>
    </location>
    <ligand>
        <name>Ca(2+)</name>
        <dbReference type="ChEBI" id="CHEBI:29108"/>
    </ligand>
</feature>
<feature type="binding site" evidence="1">
    <location>
        <position position="158"/>
    </location>
    <ligand>
        <name>Mg(2+)</name>
        <dbReference type="ChEBI" id="CHEBI:18420"/>
    </ligand>
</feature>
<feature type="binding site" evidence="1">
    <location>
        <position position="172"/>
    </location>
    <ligand>
        <name>ATP</name>
        <dbReference type="ChEBI" id="CHEBI:30616"/>
        <note>ligand shared between two neighboring subunits of the homotrimer</note>
    </ligand>
</feature>
<feature type="binding site" evidence="1">
    <location>
        <position position="275"/>
    </location>
    <ligand>
        <name>ATP</name>
        <dbReference type="ChEBI" id="CHEBI:30616"/>
        <note>ligand shared between two neighboring subunits of the homotrimer</note>
    </ligand>
</feature>
<feature type="binding site" evidence="1">
    <location>
        <position position="279"/>
    </location>
    <ligand>
        <name>ATP</name>
        <dbReference type="ChEBI" id="CHEBI:30616"/>
        <note>ligand shared between two neighboring subunits of the homotrimer</note>
    </ligand>
</feature>
<feature type="binding site" description="covalent" evidence="1">
    <location>
        <position position="281"/>
    </location>
    <ligand>
        <name>ATP</name>
        <dbReference type="ChEBI" id="CHEBI:30616"/>
        <note>ligand shared between two neighboring subunits of the homotrimer</note>
    </ligand>
</feature>
<feature type="binding site" evidence="1">
    <location>
        <position position="299"/>
    </location>
    <ligand>
        <name>ATP</name>
        <dbReference type="ChEBI" id="CHEBI:30616"/>
        <note>ligand shared between two neighboring subunits of the homotrimer</note>
    </ligand>
</feature>
<feature type="glycosylation site" description="N-linked (GlcNAc...) asparagine" evidence="1">
    <location>
        <position position="139"/>
    </location>
</feature>
<feature type="glycosylation site" description="N-linked (GlcNAc...) asparagine" evidence="1">
    <location>
        <position position="170"/>
    </location>
</feature>
<feature type="glycosylation site" description="N-linked (GlcNAc...) asparagine" evidence="1">
    <location>
        <position position="194"/>
    </location>
</feature>
<feature type="glycosylation site" description="N-linked (GlcNAc...) asparagine" evidence="1">
    <location>
        <position position="290"/>
    </location>
</feature>
<feature type="disulfide bond" evidence="1">
    <location>
        <begin position="107"/>
        <end position="153"/>
    </location>
</feature>
<feature type="disulfide bond" evidence="1">
    <location>
        <begin position="116"/>
        <end position="137"/>
    </location>
</feature>
<feature type="disulfide bond" evidence="1">
    <location>
        <begin position="122"/>
        <end position="147"/>
    </location>
</feature>
<feature type="disulfide bond" evidence="1">
    <location>
        <begin position="203"/>
        <end position="213"/>
    </location>
</feature>
<feature type="disulfide bond" evidence="1">
    <location>
        <begin position="247"/>
        <end position="256"/>
    </location>
</feature>
<feature type="sequence conflict" description="In Ref. 2; CAA62223." evidence="7" ref="2">
    <original>M</original>
    <variation>I</variation>
    <location>
        <position position="96"/>
    </location>
</feature>
<proteinExistence type="evidence at protein level"/>
<protein>
    <recommendedName>
        <fullName>P2X purinoceptor 3</fullName>
        <shortName>P2X3</shortName>
    </recommendedName>
    <alternativeName>
        <fullName>ATP receptor</fullName>
    </alternativeName>
    <alternativeName>
        <fullName>Purinergic receptor</fullName>
    </alternativeName>
</protein>
<comment type="function">
    <text evidence="2 3 4 5">Extracellular ATP-activated non-selective cation channel (PubMed:10440098, PubMed:7566119, PubMed:7566120). Plays particularly important role in sensory neurons where its activation is critical for gustatory, nociceptive responses, visceral reflexes and sensory hypersensitization (By similarity).</text>
</comment>
<comment type="catalytic activity">
    <reaction evidence="3">
        <text>Ca(2+)(in) = Ca(2+)(out)</text>
        <dbReference type="Rhea" id="RHEA:29671"/>
        <dbReference type="ChEBI" id="CHEBI:29108"/>
    </reaction>
</comment>
<comment type="catalytic activity">
    <reaction evidence="1">
        <text>Na(+)(in) = Na(+)(out)</text>
        <dbReference type="Rhea" id="RHEA:34963"/>
        <dbReference type="ChEBI" id="CHEBI:29101"/>
    </reaction>
</comment>
<comment type="activity regulation">
    <text evidence="1 3">Has high sensitivity to ATP. Fast activation by external ATP. Exhibits rapid desensitization. Sensitives to the ATP agonist:alpha/beta-methylene-ATP (PubMed:10440098). Subject to allosteric inhibition by AF-219. Mg(2+) and Ca(2+) slow deactivation of P2RX3 (By similarity).</text>
</comment>
<comment type="subunit">
    <text evidence="1 5">Homotrimer (By similarity). Forms heterotrimer with P2RX2. Heterotrimeric P2RX2/3 has a ligand dose-response profile that is distinct from either homotrimeric P2RX2 or P2RX3 (PubMed:7566120).</text>
</comment>
<comment type="subcellular location">
    <subcellularLocation>
        <location evidence="4 5">Cell membrane</location>
        <topology evidence="1">Multi-pass membrane protein</topology>
    </subcellularLocation>
    <text evidence="6">Localizes to neuronal cell body of sensory neurons.</text>
</comment>
<comment type="tissue specificity">
    <text evidence="4">Selectively expressed in sensory ganglia.</text>
</comment>
<comment type="domain">
    <text evidence="1">Contains extracellular allosteric binding sites-distinct from the orthosteric binding site.</text>
</comment>
<comment type="similarity">
    <text evidence="7">Belongs to the P2X receptor family.</text>
</comment>
<evidence type="ECO:0000250" key="1">
    <source>
        <dbReference type="UniProtKB" id="P56373"/>
    </source>
</evidence>
<evidence type="ECO:0000250" key="2">
    <source>
        <dbReference type="UniProtKB" id="Q3UR32"/>
    </source>
</evidence>
<evidence type="ECO:0000269" key="3">
    <source>
    </source>
</evidence>
<evidence type="ECO:0000269" key="4">
    <source>
    </source>
</evidence>
<evidence type="ECO:0000269" key="5">
    <source>
    </source>
</evidence>
<evidence type="ECO:0000269" key="6">
    <source>
    </source>
</evidence>
<evidence type="ECO:0000305" key="7"/>
<name>P2RX3_RAT</name>
<reference key="1">
    <citation type="journal article" date="1995" name="Nature">
        <title>Coexpression of P2X2 and P2X3 receptor subunits can account for ATP-gated currents in sensory neurons.</title>
        <authorList>
            <person name="Lewis C."/>
            <person name="Neidhart S."/>
            <person name="Holy C."/>
            <person name="North R.A."/>
            <person name="Buell G.N."/>
            <person name="Surprenant A."/>
        </authorList>
    </citation>
    <scope>NUCLEOTIDE SEQUENCE [MRNA]</scope>
    <scope>FUNCTION</scope>
    <scope>SUBCELLULAR LOCATION</scope>
    <scope>SUBUNIT</scope>
    <scope>INTERACTION WITH P2RX2</scope>
    <source>
        <tissue>Spinal ganglion</tissue>
    </source>
</reference>
<reference key="2">
    <citation type="journal article" date="1995" name="Nature">
        <title>A P2X purinoceptor expressed by a subset of sensory neurons.</title>
        <authorList>
            <person name="Chen C.-C."/>
            <person name="Akopian A.N."/>
            <person name="Sivilotti L."/>
            <person name="Colquhoun D."/>
            <person name="Burnstock G."/>
            <person name="Wood J.N."/>
        </authorList>
    </citation>
    <scope>NUCLEOTIDE SEQUENCE [MRNA]</scope>
    <scope>FUNCTION</scope>
    <scope>SUBCELLULAR LOCATION</scope>
    <scope>TISSUE SPECIFICITY</scope>
    <source>
        <strain>Sprague-Dawley</strain>
        <tissue>Spinal ganglion</tissue>
    </source>
</reference>
<reference key="3">
    <citation type="journal article" date="1998" name="NeuroReport">
        <title>Ultrastructural localization of P2X3 receptors in rat sensory neurons.</title>
        <authorList>
            <person name="Llewellyn-Smith I.J."/>
            <person name="Burnstock G."/>
        </authorList>
    </citation>
    <scope>SUBCELLULAR LOCATION</scope>
</reference>
<reference key="4">
    <citation type="journal article" date="1999" name="Eur. J. Pharmacol.">
        <title>Pharmacological characterization of recombinant human and rat P2X receptor subtypes.</title>
        <authorList>
            <person name="Bianchi B.R."/>
            <person name="Lynch K.J."/>
            <person name="Touma E."/>
            <person name="Niforatos W."/>
            <person name="Burgard E.C."/>
            <person name="Alexander K.M."/>
            <person name="Park H.S."/>
            <person name="Yu H."/>
            <person name="Metzger R."/>
            <person name="Kowaluk E."/>
            <person name="Jarvis M.F."/>
            <person name="van Biesen T."/>
        </authorList>
    </citation>
    <scope>FUNCTION</scope>
    <scope>TRANSPORTER ACTIVITY</scope>
    <scope>ACTIVITY REGULATION</scope>
</reference>
<reference key="5">
    <citation type="journal article" date="2001" name="J. Pharmacol. Exp. Ther.">
        <title>Coexpression of P2X(3) and P2X(2) receptor subunits in varying amounts generates heterogeneous populations of P2X receptors that evoke a spectrum of agonist responses comparable to that seen in sensory neurons.</title>
        <authorList>
            <person name="Liu M."/>
            <person name="King B.F."/>
            <person name="Dunn P.M."/>
            <person name="Rong W."/>
            <person name="Townsend-Nicholson A."/>
            <person name="Burnstock G."/>
        </authorList>
    </citation>
    <scope>SUBUNIT</scope>
    <scope>INTERACTION WITH P2RX2</scope>
</reference>
<accession>P49654</accession>
<keyword id="KW-0067">ATP-binding</keyword>
<keyword id="KW-0106">Calcium</keyword>
<keyword id="KW-1003">Cell membrane</keyword>
<keyword id="KW-1015">Disulfide bond</keyword>
<keyword id="KW-0325">Glycoprotein</keyword>
<keyword id="KW-0407">Ion channel</keyword>
<keyword id="KW-0406">Ion transport</keyword>
<keyword id="KW-1071">Ligand-gated ion channel</keyword>
<keyword id="KW-0460">Magnesium</keyword>
<keyword id="KW-0472">Membrane</keyword>
<keyword id="KW-0479">Metal-binding</keyword>
<keyword id="KW-0547">Nucleotide-binding</keyword>
<keyword id="KW-0675">Receptor</keyword>
<keyword id="KW-1185">Reference proteome</keyword>
<keyword id="KW-0812">Transmembrane</keyword>
<keyword id="KW-1133">Transmembrane helix</keyword>
<keyword id="KW-0813">Transport</keyword>
<organism>
    <name type="scientific">Rattus norvegicus</name>
    <name type="common">Rat</name>
    <dbReference type="NCBI Taxonomy" id="10116"/>
    <lineage>
        <taxon>Eukaryota</taxon>
        <taxon>Metazoa</taxon>
        <taxon>Chordata</taxon>
        <taxon>Craniata</taxon>
        <taxon>Vertebrata</taxon>
        <taxon>Euteleostomi</taxon>
        <taxon>Mammalia</taxon>
        <taxon>Eutheria</taxon>
        <taxon>Euarchontoglires</taxon>
        <taxon>Glires</taxon>
        <taxon>Rodentia</taxon>
        <taxon>Myomorpha</taxon>
        <taxon>Muroidea</taxon>
        <taxon>Muridae</taxon>
        <taxon>Murinae</taxon>
        <taxon>Rattus</taxon>
    </lineage>
</organism>